<feature type="chain" id="PRO_0000097638" description="Scytalone dehydratase">
    <location>
        <begin position="1"/>
        <end position="188"/>
    </location>
</feature>
<feature type="active site" evidence="2">
    <location>
        <position position="82"/>
    </location>
</feature>
<feature type="active site" evidence="2">
    <location>
        <position position="107"/>
    </location>
</feature>
<feature type="binding site" evidence="2">
    <location>
        <position position="27"/>
    </location>
    <ligand>
        <name>substrate</name>
    </ligand>
</feature>
<feature type="binding site" evidence="2">
    <location>
        <position position="47"/>
    </location>
    <ligand>
        <name>substrate</name>
    </ligand>
</feature>
<feature type="binding site" evidence="2">
    <location>
        <position position="50"/>
    </location>
    <ligand>
        <name>substrate</name>
    </ligand>
</feature>
<feature type="binding site" evidence="2">
    <location>
        <position position="128"/>
    </location>
    <ligand>
        <name>substrate</name>
    </ligand>
</feature>
<gene>
    <name evidence="4" type="primary">SCD1</name>
    <name type="ORF">Cob_03011</name>
    <name type="ORF">Cob_v008979</name>
</gene>
<evidence type="ECO:0000250" key="1">
    <source>
        <dbReference type="UniProtKB" id="O14434"/>
    </source>
</evidence>
<evidence type="ECO:0000250" key="2">
    <source>
        <dbReference type="UniProtKB" id="P56221"/>
    </source>
</evidence>
<evidence type="ECO:0000269" key="3">
    <source>
    </source>
</evidence>
<evidence type="ECO:0000303" key="4">
    <source>
    </source>
</evidence>
<evidence type="ECO:0000305" key="5"/>
<protein>
    <recommendedName>
        <fullName>Scytalone dehydratase</fullName>
        <ecNumber>4.2.1.94</ecNumber>
    </recommendedName>
</protein>
<proteinExistence type="evidence at protein level"/>
<comment type="function">
    <text evidence="3">Scytalone dehydratase; part of the gene cluster that mediates the biosynthesis of dihydroxynaphthalene (DHN)-melanin, a bluish-green pigment and a structural component of the conidial wall (PubMed:8953707). Within the pathway, catalyzes the dehydration of scytalone as well as of vermelone (PubMed:8953707).</text>
</comment>
<comment type="catalytic activity">
    <reaction evidence="3">
        <text>scytalone = 1,3,8-trihydroxynaphthalene + H2O</text>
        <dbReference type="Rhea" id="RHEA:24396"/>
        <dbReference type="ChEBI" id="CHEBI:15377"/>
        <dbReference type="ChEBI" id="CHEBI:16945"/>
        <dbReference type="ChEBI" id="CHEBI:18393"/>
        <dbReference type="EC" id="4.2.1.94"/>
    </reaction>
</comment>
<comment type="activity regulation">
    <text evidence="3">Carpropamid acts as an efficient inhibitor of scytalone dehydratase activity.</text>
</comment>
<comment type="pathway">
    <text evidence="3">Pigment biosynthesis; melanin biosynthesis.</text>
</comment>
<comment type="subunit">
    <text evidence="2">Homotrimer (By similarity). Each subunit contains an active site, located in the central part of the hydrophobic core of the monomer, which functions independently (By similarity).</text>
</comment>
<comment type="subcellular location">
    <subcellularLocation>
        <location evidence="1">Endosome</location>
    </subcellularLocation>
</comment>
<comment type="disruption phenotype">
    <text evidence="3">Forms reddish-brown colonies and accumulated reddish pigments in the culture medium (PubMed:8953707).</text>
</comment>
<comment type="similarity">
    <text evidence="5">Belongs to the scytalone dehydratase family.</text>
</comment>
<organism>
    <name type="scientific">Colletotrichum orbiculare (strain 104-T / ATCC 96160 / CBS 514.97 / LARS 414 / MAFF 240422)</name>
    <name type="common">Cucumber anthracnose fungus</name>
    <name type="synonym">Colletotrichum lagenarium</name>
    <dbReference type="NCBI Taxonomy" id="1213857"/>
    <lineage>
        <taxon>Eukaryota</taxon>
        <taxon>Fungi</taxon>
        <taxon>Dikarya</taxon>
        <taxon>Ascomycota</taxon>
        <taxon>Pezizomycotina</taxon>
        <taxon>Sordariomycetes</taxon>
        <taxon>Hypocreomycetidae</taxon>
        <taxon>Glomerellales</taxon>
        <taxon>Glomerellaceae</taxon>
        <taxon>Colletotrichum</taxon>
        <taxon>Colletotrichum orbiculare species complex</taxon>
    </lineage>
</organism>
<dbReference type="EC" id="4.2.1.94"/>
<dbReference type="EMBL" id="D86079">
    <property type="protein sequence ID" value="BAA13009.1"/>
    <property type="molecule type" value="Genomic_DNA"/>
</dbReference>
<dbReference type="EMBL" id="KB725656">
    <property type="protein sequence ID" value="ENH88853.1"/>
    <property type="molecule type" value="Genomic_DNA"/>
</dbReference>
<dbReference type="EMBL" id="AMCV02000025">
    <property type="protein sequence ID" value="TDZ18313.1"/>
    <property type="molecule type" value="Genomic_DNA"/>
</dbReference>
<dbReference type="SMR" id="Q00455"/>
<dbReference type="STRING" id="1213857.Q00455"/>
<dbReference type="EnsemblFungi" id="ENH88853">
    <property type="protein sequence ID" value="ENH88853"/>
    <property type="gene ID" value="Cob_03011"/>
</dbReference>
<dbReference type="eggNOG" id="ENOG502SNND">
    <property type="taxonomic scope" value="Eukaryota"/>
</dbReference>
<dbReference type="HOGENOM" id="CLU_101889_0_0_1"/>
<dbReference type="OrthoDB" id="5281072at2759"/>
<dbReference type="UniPathway" id="UPA00785"/>
<dbReference type="PHI-base" id="PHI:58"/>
<dbReference type="Proteomes" id="UP000014480">
    <property type="component" value="Unassembled WGS sequence"/>
</dbReference>
<dbReference type="GO" id="GO:0005768">
    <property type="term" value="C:endosome"/>
    <property type="evidence" value="ECO:0007669"/>
    <property type="project" value="UniProtKB-SubCell"/>
</dbReference>
<dbReference type="GO" id="GO:0030411">
    <property type="term" value="F:scytalone dehydratase activity"/>
    <property type="evidence" value="ECO:0007669"/>
    <property type="project" value="UniProtKB-EC"/>
</dbReference>
<dbReference type="GO" id="GO:0042438">
    <property type="term" value="P:melanin biosynthetic process"/>
    <property type="evidence" value="ECO:0007669"/>
    <property type="project" value="UniProtKB-UniPathway"/>
</dbReference>
<dbReference type="Gene3D" id="3.10.450.50">
    <property type="match status" value="1"/>
</dbReference>
<dbReference type="InterPro" id="IPR032710">
    <property type="entry name" value="NTF2-like_dom_sf"/>
</dbReference>
<dbReference type="InterPro" id="IPR004235">
    <property type="entry name" value="Scytalone_dehydratase"/>
</dbReference>
<dbReference type="InterPro" id="IPR049884">
    <property type="entry name" value="Scytalone_dh"/>
</dbReference>
<dbReference type="Pfam" id="PF02982">
    <property type="entry name" value="Scytalone_dh"/>
    <property type="match status" value="1"/>
</dbReference>
<dbReference type="PIRSF" id="PIRSF024851">
    <property type="entry name" value="SCD1"/>
    <property type="match status" value="1"/>
</dbReference>
<dbReference type="SUPFAM" id="SSF54427">
    <property type="entry name" value="NTF2-like"/>
    <property type="match status" value="1"/>
</dbReference>
<reference key="1">
    <citation type="journal article" date="1996" name="Appl. Environ. Microbiol.">
        <title>Cloning and structural analysis of the melanin biosynthesis gene SCD1 encoding scytalone dehydratase in Colletotrichum lagenarium.</title>
        <authorList>
            <person name="Kubo Y."/>
            <person name="Takano Y."/>
            <person name="Endo N."/>
            <person name="Yasuda N."/>
            <person name="Tajima S."/>
            <person name="Furusawa I."/>
        </authorList>
    </citation>
    <scope>NUCLEOTIDE SEQUENCE [GENOMIC DNA]</scope>
    <scope>FUNCTION</scope>
    <scope>DISRUPTION PHENOTYPE</scope>
    <scope>CATALYTIC ACTIVITY</scope>
    <scope>ACTIVITY REGULATION</scope>
    <source>
        <strain>104-T / ATCC 96160 / CBS 514.97 / LARS 414 / MAFF 240422</strain>
    </source>
</reference>
<reference key="2">
    <citation type="journal article" date="2013" name="New Phytol.">
        <title>Comparative genomic and transcriptomic analyses reveal the hemibiotrophic stage shift of Colletotrichum fungi.</title>
        <authorList>
            <person name="Gan P."/>
            <person name="Ikeda K."/>
            <person name="Irieda H."/>
            <person name="Narusaka M."/>
            <person name="O'Connell R.J."/>
            <person name="Narusaka Y."/>
            <person name="Takano Y."/>
            <person name="Kubo Y."/>
            <person name="Shirasu K."/>
        </authorList>
    </citation>
    <scope>NUCLEOTIDE SEQUENCE [LARGE SCALE GENOMIC DNA]</scope>
    <source>
        <strain>104-T / ATCC 96160 / CBS 514.97 / LARS 414 / MAFF 240422</strain>
    </source>
</reference>
<reference key="3">
    <citation type="journal article" date="2019" name="Mol. Plant Microbe Interact.">
        <title>Genome sequence resources for four phytopathogenic fungi from the Colletotrichum orbiculare species complex.</title>
        <authorList>
            <person name="Gan P."/>
            <person name="Tsushima A."/>
            <person name="Narusaka M."/>
            <person name="Narusaka Y."/>
            <person name="Takano Y."/>
            <person name="Kubo Y."/>
            <person name="Shirasu K."/>
        </authorList>
    </citation>
    <scope>GENOME REANNOTATION</scope>
    <source>
        <strain>104-T / ATCC 96160 / CBS 514.97 / LARS 414 / MAFF 240422</strain>
    </source>
</reference>
<sequence>MASPAGNITFEDYLGLNAALFEWADSYDSKDWDRLRKCIAPELRIDYRSFLDKIWEAMPAEEFIAMISDKSVLGNPLLKTQHFIGGSRWEKVSDTEVIGHHQLRVPHQKYTDASRTEVAVKGHAHSYNMHWYRKVNGVWKFAGLNPEIRWSEYDFDAVFADGRDSYGTEDQKTDVKVVEKEIKFAAAH</sequence>
<name>SCYD_COLOR</name>
<accession>Q00455</accession>
<accession>A0A484FJW6</accession>
<accession>N4VLA3</accession>
<keyword id="KW-0967">Endosome</keyword>
<keyword id="KW-0456">Lyase</keyword>
<keyword id="KW-0470">Melanin biosynthesis</keyword>
<keyword id="KW-1185">Reference proteome</keyword>